<evidence type="ECO:0000255" key="1">
    <source>
        <dbReference type="HAMAP-Rule" id="MF_00182"/>
    </source>
</evidence>
<evidence type="ECO:0000305" key="2"/>
<comment type="function">
    <text evidence="1">Attaches a formyl group to the free amino group of methionyl-tRNA(fMet). The formyl group appears to play a dual role in the initiator identity of N-formylmethionyl-tRNA by promoting its recognition by IF2 and preventing the misappropriation of this tRNA by the elongation apparatus.</text>
</comment>
<comment type="catalytic activity">
    <reaction evidence="1">
        <text>L-methionyl-tRNA(fMet) + (6R)-10-formyltetrahydrofolate = N-formyl-L-methionyl-tRNA(fMet) + (6S)-5,6,7,8-tetrahydrofolate + H(+)</text>
        <dbReference type="Rhea" id="RHEA:24380"/>
        <dbReference type="Rhea" id="RHEA-COMP:9952"/>
        <dbReference type="Rhea" id="RHEA-COMP:9953"/>
        <dbReference type="ChEBI" id="CHEBI:15378"/>
        <dbReference type="ChEBI" id="CHEBI:57453"/>
        <dbReference type="ChEBI" id="CHEBI:78530"/>
        <dbReference type="ChEBI" id="CHEBI:78844"/>
        <dbReference type="ChEBI" id="CHEBI:195366"/>
        <dbReference type="EC" id="2.1.2.9"/>
    </reaction>
</comment>
<comment type="similarity">
    <text evidence="1 2">Belongs to the Fmt family.</text>
</comment>
<organism>
    <name type="scientific">Rickettsia prowazekii (strain Madrid E)</name>
    <dbReference type="NCBI Taxonomy" id="272947"/>
    <lineage>
        <taxon>Bacteria</taxon>
        <taxon>Pseudomonadati</taxon>
        <taxon>Pseudomonadota</taxon>
        <taxon>Alphaproteobacteria</taxon>
        <taxon>Rickettsiales</taxon>
        <taxon>Rickettsiaceae</taxon>
        <taxon>Rickettsieae</taxon>
        <taxon>Rickettsia</taxon>
        <taxon>typhus group</taxon>
    </lineage>
</organism>
<name>FMT_RICPR</name>
<reference key="1">
    <citation type="journal article" date="1998" name="Nature">
        <title>The genome sequence of Rickettsia prowazekii and the origin of mitochondria.</title>
        <authorList>
            <person name="Andersson S.G.E."/>
            <person name="Zomorodipour A."/>
            <person name="Andersson J.O."/>
            <person name="Sicheritz-Ponten T."/>
            <person name="Alsmark U.C.M."/>
            <person name="Podowski R.M."/>
            <person name="Naeslund A.K."/>
            <person name="Eriksson A.-S."/>
            <person name="Winkler H.H."/>
            <person name="Kurland C.G."/>
        </authorList>
    </citation>
    <scope>NUCLEOTIDE SEQUENCE [LARGE SCALE GENOMIC DNA]</scope>
    <source>
        <strain>Madrid E</strain>
    </source>
</reference>
<reference key="2">
    <citation type="journal article" date="1995" name="J. Bacteriol.">
        <title>Unusual organization of the rRNA genes in Rickettsia prowazekii.</title>
        <authorList>
            <person name="Andersson S.G.E."/>
            <person name="Zomorodipour A."/>
            <person name="Winkler H.H."/>
            <person name="Kurland C.G."/>
        </authorList>
    </citation>
    <scope>NUCLEOTIDE SEQUENCE [GENOMIC DNA] OF 11-303</scope>
    <source>
        <strain>Madrid E</strain>
    </source>
</reference>
<accession>P50932</accession>
<sequence>MKVIFMGTPEFAVPTLKKLIIHHEVKAVFTQQPKAKGRGLHLAKSPIHQLAFEHQIPVYSPSTLRNDETINLIKKIDADIIVVIAYGFIVPKAILEAKKYGCLNIHPSDLPRHRGAAPLQRTIIEGDRKSSVCIMRMDSGLDTGDILLKEDLNLERRITLDELSNKCAHLGAELLIKTLANIDNIVPIKQSSNGITYAHKLTKAEGKINWYESAYSIDCKIRGMNPWPGAYFSYNDKIIKILRAEYFNYNHHFIPGTVINNKLEIACGSGILRVKKLQQESKKALNIEEFLRGTNILKDTILK</sequence>
<keyword id="KW-0648">Protein biosynthesis</keyword>
<keyword id="KW-1185">Reference proteome</keyword>
<keyword id="KW-0808">Transferase</keyword>
<proteinExistence type="inferred from homology"/>
<feature type="chain" id="PRO_0000083033" description="Methionyl-tRNA formyltransferase">
    <location>
        <begin position="1"/>
        <end position="303"/>
    </location>
</feature>
<feature type="binding site" evidence="1">
    <location>
        <begin position="108"/>
        <end position="111"/>
    </location>
    <ligand>
        <name>(6S)-5,6,7,8-tetrahydrofolate</name>
        <dbReference type="ChEBI" id="CHEBI:57453"/>
    </ligand>
</feature>
<dbReference type="EC" id="2.1.2.9" evidence="1"/>
<dbReference type="EMBL" id="AJ235270">
    <property type="protein sequence ID" value="CAA14674.1"/>
    <property type="molecule type" value="Genomic_DNA"/>
</dbReference>
<dbReference type="EMBL" id="Z49077">
    <property type="protein sequence ID" value="CAA88897.1"/>
    <property type="molecule type" value="Genomic_DNA"/>
</dbReference>
<dbReference type="PIR" id="C71732">
    <property type="entry name" value="C71732"/>
</dbReference>
<dbReference type="RefSeq" id="NP_220597.1">
    <property type="nucleotide sequence ID" value="NC_000963.1"/>
</dbReference>
<dbReference type="RefSeq" id="WP_010886235.1">
    <property type="nucleotide sequence ID" value="NC_000963.1"/>
</dbReference>
<dbReference type="SMR" id="P50932"/>
<dbReference type="STRING" id="272947.gene:17555290"/>
<dbReference type="EnsemblBacteria" id="CAA14674">
    <property type="protein sequence ID" value="CAA14674"/>
    <property type="gene ID" value="CAA14674"/>
</dbReference>
<dbReference type="GeneID" id="57569337"/>
<dbReference type="KEGG" id="rpr:RP209"/>
<dbReference type="PATRIC" id="fig|272947.5.peg.218"/>
<dbReference type="eggNOG" id="COG0223">
    <property type="taxonomic scope" value="Bacteria"/>
</dbReference>
<dbReference type="HOGENOM" id="CLU_033347_1_1_5"/>
<dbReference type="OrthoDB" id="9802815at2"/>
<dbReference type="Proteomes" id="UP000002480">
    <property type="component" value="Chromosome"/>
</dbReference>
<dbReference type="GO" id="GO:0005829">
    <property type="term" value="C:cytosol"/>
    <property type="evidence" value="ECO:0007669"/>
    <property type="project" value="TreeGrafter"/>
</dbReference>
<dbReference type="GO" id="GO:0004479">
    <property type="term" value="F:methionyl-tRNA formyltransferase activity"/>
    <property type="evidence" value="ECO:0007669"/>
    <property type="project" value="UniProtKB-UniRule"/>
</dbReference>
<dbReference type="CDD" id="cd08646">
    <property type="entry name" value="FMT_core_Met-tRNA-FMT_N"/>
    <property type="match status" value="1"/>
</dbReference>
<dbReference type="CDD" id="cd08704">
    <property type="entry name" value="Met_tRNA_FMT_C"/>
    <property type="match status" value="1"/>
</dbReference>
<dbReference type="Gene3D" id="3.40.50.12230">
    <property type="match status" value="1"/>
</dbReference>
<dbReference type="HAMAP" id="MF_00182">
    <property type="entry name" value="Formyl_trans"/>
    <property type="match status" value="1"/>
</dbReference>
<dbReference type="InterPro" id="IPR005794">
    <property type="entry name" value="Fmt"/>
</dbReference>
<dbReference type="InterPro" id="IPR005793">
    <property type="entry name" value="Formyl_trans_C"/>
</dbReference>
<dbReference type="InterPro" id="IPR002376">
    <property type="entry name" value="Formyl_transf_N"/>
</dbReference>
<dbReference type="InterPro" id="IPR036477">
    <property type="entry name" value="Formyl_transf_N_sf"/>
</dbReference>
<dbReference type="InterPro" id="IPR011034">
    <property type="entry name" value="Formyl_transferase-like_C_sf"/>
</dbReference>
<dbReference type="InterPro" id="IPR044135">
    <property type="entry name" value="Met-tRNA-FMT_C"/>
</dbReference>
<dbReference type="InterPro" id="IPR041711">
    <property type="entry name" value="Met-tRNA-FMT_N"/>
</dbReference>
<dbReference type="NCBIfam" id="TIGR00460">
    <property type="entry name" value="fmt"/>
    <property type="match status" value="1"/>
</dbReference>
<dbReference type="PANTHER" id="PTHR11138">
    <property type="entry name" value="METHIONYL-TRNA FORMYLTRANSFERASE"/>
    <property type="match status" value="1"/>
</dbReference>
<dbReference type="PANTHER" id="PTHR11138:SF5">
    <property type="entry name" value="METHIONYL-TRNA FORMYLTRANSFERASE, MITOCHONDRIAL"/>
    <property type="match status" value="1"/>
</dbReference>
<dbReference type="Pfam" id="PF02911">
    <property type="entry name" value="Formyl_trans_C"/>
    <property type="match status" value="1"/>
</dbReference>
<dbReference type="Pfam" id="PF00551">
    <property type="entry name" value="Formyl_trans_N"/>
    <property type="match status" value="1"/>
</dbReference>
<dbReference type="SUPFAM" id="SSF50486">
    <property type="entry name" value="FMT C-terminal domain-like"/>
    <property type="match status" value="1"/>
</dbReference>
<dbReference type="SUPFAM" id="SSF53328">
    <property type="entry name" value="Formyltransferase"/>
    <property type="match status" value="1"/>
</dbReference>
<protein>
    <recommendedName>
        <fullName evidence="1">Methionyl-tRNA formyltransferase</fullName>
        <ecNumber evidence="1">2.1.2.9</ecNumber>
    </recommendedName>
</protein>
<gene>
    <name evidence="1" type="primary">fmt</name>
    <name type="ordered locus">RP209</name>
</gene>